<keyword id="KW-0002">3D-structure</keyword>
<keyword id="KW-0903">Direct protein sequencing</keyword>
<keyword id="KW-0487">Methotrexate resistance</keyword>
<keyword id="KW-0521">NADP</keyword>
<keyword id="KW-0554">One-carbon metabolism</keyword>
<keyword id="KW-0560">Oxidoreductase</keyword>
<keyword id="KW-1185">Reference proteome</keyword>
<keyword id="KW-0694">RNA-binding</keyword>
<proteinExistence type="evidence at protein level"/>
<dbReference type="EC" id="1.5.1.3"/>
<dbReference type="PIR" id="A00390">
    <property type="entry name" value="RDCHD"/>
</dbReference>
<dbReference type="PDB" id="1DR1">
    <property type="method" value="X-ray"/>
    <property type="resolution" value="2.20 A"/>
    <property type="chains" value="A=1-189"/>
</dbReference>
<dbReference type="PDB" id="1DR2">
    <property type="method" value="X-ray"/>
    <property type="resolution" value="2.30 A"/>
    <property type="chains" value="A=1-189"/>
</dbReference>
<dbReference type="PDB" id="1DR3">
    <property type="method" value="X-ray"/>
    <property type="resolution" value="2.30 A"/>
    <property type="chains" value="A=1-189"/>
</dbReference>
<dbReference type="PDB" id="1DR4">
    <property type="method" value="X-ray"/>
    <property type="resolution" value="2.40 A"/>
    <property type="chains" value="A=1-189"/>
</dbReference>
<dbReference type="PDB" id="1DR5">
    <property type="method" value="X-ray"/>
    <property type="resolution" value="2.40 A"/>
    <property type="chains" value="A=1-189"/>
</dbReference>
<dbReference type="PDB" id="1DR6">
    <property type="method" value="X-ray"/>
    <property type="resolution" value="2.40 A"/>
    <property type="chains" value="A=1-189"/>
</dbReference>
<dbReference type="PDB" id="1DR7">
    <property type="method" value="X-ray"/>
    <property type="resolution" value="2.40 A"/>
    <property type="chains" value="A=1-189"/>
</dbReference>
<dbReference type="PDB" id="8DFR">
    <property type="method" value="X-ray"/>
    <property type="resolution" value="1.70 A"/>
    <property type="chains" value="A=1-189"/>
</dbReference>
<dbReference type="PDBsum" id="1DR1"/>
<dbReference type="PDBsum" id="1DR2"/>
<dbReference type="PDBsum" id="1DR3"/>
<dbReference type="PDBsum" id="1DR4"/>
<dbReference type="PDBsum" id="1DR5"/>
<dbReference type="PDBsum" id="1DR6"/>
<dbReference type="PDBsum" id="1DR7"/>
<dbReference type="PDBsum" id="8DFR"/>
<dbReference type="SMR" id="P00378"/>
<dbReference type="FunCoup" id="P00378">
    <property type="interactions" value="361"/>
</dbReference>
<dbReference type="STRING" id="9031.ENSGALP00000041459"/>
<dbReference type="BindingDB" id="P00378"/>
<dbReference type="ChEMBL" id="CHEMBL2575"/>
<dbReference type="DrugBank" id="DB03904">
    <property type="generic name" value="Urea"/>
</dbReference>
<dbReference type="DrugCentral" id="P00378"/>
<dbReference type="PaxDb" id="9031-ENSGALP00000041459"/>
<dbReference type="VEuPathDB" id="HostDB:geneid_427317"/>
<dbReference type="eggNOG" id="KOG1324">
    <property type="taxonomic scope" value="Eukaryota"/>
</dbReference>
<dbReference type="InParanoid" id="P00378"/>
<dbReference type="OrthoDB" id="4664297at2759"/>
<dbReference type="BRENDA" id="1.5.1.3">
    <property type="organism ID" value="1306"/>
</dbReference>
<dbReference type="SABIO-RK" id="P00378"/>
<dbReference type="UniPathway" id="UPA00077">
    <property type="reaction ID" value="UER00158"/>
</dbReference>
<dbReference type="EvolutionaryTrace" id="P00378"/>
<dbReference type="PRO" id="PR:P00378"/>
<dbReference type="Proteomes" id="UP000000539">
    <property type="component" value="Unassembled WGS sequence"/>
</dbReference>
<dbReference type="GO" id="GO:0005739">
    <property type="term" value="C:mitochondrion"/>
    <property type="evidence" value="ECO:0000318"/>
    <property type="project" value="GO_Central"/>
</dbReference>
<dbReference type="GO" id="GO:0004146">
    <property type="term" value="F:dihydrofolate reductase activity"/>
    <property type="evidence" value="ECO:0000250"/>
    <property type="project" value="UniProtKB"/>
</dbReference>
<dbReference type="GO" id="GO:0003729">
    <property type="term" value="F:mRNA binding"/>
    <property type="evidence" value="ECO:0000250"/>
    <property type="project" value="UniProtKB"/>
</dbReference>
<dbReference type="GO" id="GO:0050661">
    <property type="term" value="F:NADP binding"/>
    <property type="evidence" value="ECO:0000318"/>
    <property type="project" value="GO_Central"/>
</dbReference>
<dbReference type="GO" id="GO:0046452">
    <property type="term" value="P:dihydrofolate metabolic process"/>
    <property type="evidence" value="ECO:0000318"/>
    <property type="project" value="GO_Central"/>
</dbReference>
<dbReference type="GO" id="GO:0046655">
    <property type="term" value="P:folic acid metabolic process"/>
    <property type="evidence" value="ECO:0000318"/>
    <property type="project" value="GO_Central"/>
</dbReference>
<dbReference type="GO" id="GO:0006730">
    <property type="term" value="P:one-carbon metabolic process"/>
    <property type="evidence" value="ECO:0007669"/>
    <property type="project" value="UniProtKB-KW"/>
</dbReference>
<dbReference type="GO" id="GO:0031427">
    <property type="term" value="P:response to methotrexate"/>
    <property type="evidence" value="ECO:0007669"/>
    <property type="project" value="UniProtKB-KW"/>
</dbReference>
<dbReference type="GO" id="GO:0046654">
    <property type="term" value="P:tetrahydrofolate biosynthetic process"/>
    <property type="evidence" value="ECO:0000318"/>
    <property type="project" value="GO_Central"/>
</dbReference>
<dbReference type="GO" id="GO:0046653">
    <property type="term" value="P:tetrahydrofolate metabolic process"/>
    <property type="evidence" value="ECO:0000250"/>
    <property type="project" value="UniProtKB"/>
</dbReference>
<dbReference type="CDD" id="cd00209">
    <property type="entry name" value="DHFR"/>
    <property type="match status" value="1"/>
</dbReference>
<dbReference type="FunFam" id="3.40.430.10:FF:000002">
    <property type="entry name" value="Dihydrofolate reductase"/>
    <property type="match status" value="1"/>
</dbReference>
<dbReference type="Gene3D" id="3.40.430.10">
    <property type="entry name" value="Dihydrofolate Reductase, subunit A"/>
    <property type="match status" value="1"/>
</dbReference>
<dbReference type="InterPro" id="IPR012259">
    <property type="entry name" value="DHFR"/>
</dbReference>
<dbReference type="InterPro" id="IPR024072">
    <property type="entry name" value="DHFR-like_dom_sf"/>
</dbReference>
<dbReference type="InterPro" id="IPR017925">
    <property type="entry name" value="DHFR_CS"/>
</dbReference>
<dbReference type="InterPro" id="IPR001796">
    <property type="entry name" value="DHFR_dom"/>
</dbReference>
<dbReference type="PANTHER" id="PTHR48069">
    <property type="entry name" value="DIHYDROFOLATE REDUCTASE"/>
    <property type="match status" value="1"/>
</dbReference>
<dbReference type="PANTHER" id="PTHR48069:SF6">
    <property type="entry name" value="DIHYDROFOLATE REDUCTASE"/>
    <property type="match status" value="1"/>
</dbReference>
<dbReference type="Pfam" id="PF00186">
    <property type="entry name" value="DHFR_1"/>
    <property type="match status" value="1"/>
</dbReference>
<dbReference type="PRINTS" id="PR00070">
    <property type="entry name" value="DHFR"/>
</dbReference>
<dbReference type="SUPFAM" id="SSF53597">
    <property type="entry name" value="Dihydrofolate reductase-like"/>
    <property type="match status" value="1"/>
</dbReference>
<dbReference type="PROSITE" id="PS00075">
    <property type="entry name" value="DHFR_1"/>
    <property type="match status" value="1"/>
</dbReference>
<dbReference type="PROSITE" id="PS51330">
    <property type="entry name" value="DHFR_2"/>
    <property type="match status" value="1"/>
</dbReference>
<protein>
    <recommendedName>
        <fullName>Dihydrofolate reductase</fullName>
        <ecNumber>1.5.1.3</ecNumber>
    </recommendedName>
</protein>
<name>DYR_CHICK</name>
<evidence type="ECO:0000250" key="1">
    <source>
        <dbReference type="UniProtKB" id="P00374"/>
    </source>
</evidence>
<evidence type="ECO:0000255" key="2">
    <source>
        <dbReference type="PROSITE-ProRule" id="PRU00660"/>
    </source>
</evidence>
<evidence type="ECO:0000269" key="3">
    <source>
    </source>
</evidence>
<evidence type="ECO:0000305" key="4"/>
<evidence type="ECO:0000305" key="5">
    <source>
    </source>
</evidence>
<evidence type="ECO:0007744" key="6">
    <source>
        <dbReference type="PDB" id="1DR1"/>
    </source>
</evidence>
<evidence type="ECO:0007829" key="7">
    <source>
        <dbReference type="PDB" id="1DR4"/>
    </source>
</evidence>
<evidence type="ECO:0007829" key="8">
    <source>
        <dbReference type="PDB" id="8DFR"/>
    </source>
</evidence>
<reference key="1">
    <citation type="journal article" date="1980" name="Biochemistry">
        <title>Primary structure of chicken liver dihydrofolate reductase.</title>
        <authorList>
            <person name="Kumar A.A."/>
            <person name="Blankenship D.T."/>
            <person name="Kaufman B.T."/>
            <person name="Freisheim J.H."/>
        </authorList>
    </citation>
    <scope>PROTEIN SEQUENCE</scope>
</reference>
<reference key="2">
    <citation type="journal article" date="1996" name="Biochem. J.">
        <title>Activation of chicken liver dihydrofolate reductase by urea and guanidine hydrochloride is accompanied by conformational change at the active site.</title>
        <authorList>
            <person name="Fan Y.X."/>
            <person name="Ju M."/>
            <person name="Zhou J.M."/>
            <person name="Tsou C.L."/>
        </authorList>
    </citation>
    <scope>PROTEIN SEQUENCE OF 19-22; 138-141 AND 158-161</scope>
</reference>
<reference key="3">
    <citation type="journal article" date="1992" name="Biochemistry">
        <title>Crystal structure of chicken liver dihydrofolate reductase complexed with NADP+ and biopterin.</title>
        <authorList>
            <person name="McTigue M.A."/>
            <person name="Davies J.F. II"/>
            <person name="Kaufman B.T."/>
            <person name="Kraut J."/>
        </authorList>
    </citation>
    <scope>X-RAY CRYSTALLOGRAPHY (2.2 ANGSTROMS) IN COMPLEXES WITH NADPH AND DIHYDROBIOPTERIN</scope>
</reference>
<sequence length="189" mass="21650">VRSLNSIVAVCQNMGIGKDGNLPWPPLRNEYKYFQRMTSTSHVEGKQNAVIMGKKTWFSIPEKNRPLKDRINIVLSRELKEAPKGAHYLSKSLDDALALLDSPELKSKVDMVWIVGGTAVYKAAMEKPINHRLFVTRILHEFESDTFFPEIDYKDFKLLTEYPGVPADIQEEDGIQYKFEVYQKSVLAQ</sequence>
<accession>P00378</accession>
<comment type="function">
    <text>Key enzyme in folate metabolism. Contributes to the de novo mitochondrial thymidylate biosynthesis pathway. Catalyzes an essential reaction for de novo glycine and purine synthesis, and for DNA precursor synthesis. May bind to mRNA.</text>
</comment>
<comment type="catalytic activity">
    <reaction evidence="2">
        <text>(6S)-5,6,7,8-tetrahydrofolate + NADP(+) = 7,8-dihydrofolate + NADPH + H(+)</text>
        <dbReference type="Rhea" id="RHEA:15009"/>
        <dbReference type="ChEBI" id="CHEBI:15378"/>
        <dbReference type="ChEBI" id="CHEBI:57451"/>
        <dbReference type="ChEBI" id="CHEBI:57453"/>
        <dbReference type="ChEBI" id="CHEBI:57783"/>
        <dbReference type="ChEBI" id="CHEBI:58349"/>
        <dbReference type="EC" id="1.5.1.3"/>
    </reaction>
</comment>
<comment type="pathway">
    <text>Cofactor biosynthesis; tetrahydrofolate biosynthesis; 5,6,7,8-tetrahydrofolate from 7,8-dihydrofolate: step 1/1.</text>
</comment>
<comment type="similarity">
    <text evidence="4">Belongs to the dihydrofolate reductase family.</text>
</comment>
<feature type="chain" id="PRO_0000186367" description="Dihydrofolate reductase">
    <location>
        <begin position="1"/>
        <end position="189"/>
    </location>
</feature>
<feature type="domain" description="DHFR" evidence="2">
    <location>
        <begin position="3"/>
        <end position="184"/>
    </location>
</feature>
<feature type="binding site" evidence="3 6">
    <location>
        <position position="9"/>
    </location>
    <ligand>
        <name>NADP(+)</name>
        <dbReference type="ChEBI" id="CHEBI:58349"/>
    </ligand>
</feature>
<feature type="binding site" evidence="5">
    <location>
        <begin position="15"/>
        <end position="21"/>
    </location>
    <ligand>
        <name>NADP(+)</name>
        <dbReference type="ChEBI" id="CHEBI:58349"/>
    </ligand>
</feature>
<feature type="binding site" evidence="5">
    <location>
        <begin position="30"/>
        <end position="35"/>
    </location>
    <ligand>
        <name>substrate</name>
    </ligand>
</feature>
<feature type="binding site" evidence="3 6">
    <location>
        <begin position="54"/>
        <end position="56"/>
    </location>
    <ligand>
        <name>NADP(+)</name>
        <dbReference type="ChEBI" id="CHEBI:58349"/>
    </ligand>
</feature>
<feature type="binding site" evidence="1">
    <location>
        <position position="64"/>
    </location>
    <ligand>
        <name>substrate</name>
    </ligand>
</feature>
<feature type="binding site" evidence="5">
    <location>
        <position position="70"/>
    </location>
    <ligand>
        <name>substrate</name>
    </ligand>
</feature>
<feature type="binding site" evidence="3 6">
    <location>
        <begin position="76"/>
        <end position="78"/>
    </location>
    <ligand>
        <name>NADP(+)</name>
        <dbReference type="ChEBI" id="CHEBI:58349"/>
    </ligand>
</feature>
<feature type="binding site" evidence="5">
    <location>
        <begin position="116"/>
        <end position="123"/>
    </location>
    <ligand>
        <name>NADP(+)</name>
        <dbReference type="ChEBI" id="CHEBI:58349"/>
    </ligand>
</feature>
<feature type="sequence conflict" description="In Ref. 2; AA sequence." evidence="4" ref="2">
    <original>E</original>
    <variation>Q</variation>
    <location>
        <position position="141"/>
    </location>
</feature>
<feature type="strand" evidence="8">
    <location>
        <begin position="3"/>
        <end position="10"/>
    </location>
</feature>
<feature type="strand" evidence="8">
    <location>
        <begin position="15"/>
        <end position="18"/>
    </location>
</feature>
<feature type="strand" evidence="7">
    <location>
        <begin position="23"/>
        <end position="25"/>
    </location>
</feature>
<feature type="helix" evidence="8">
    <location>
        <begin position="28"/>
        <end position="39"/>
    </location>
</feature>
<feature type="strand" evidence="8">
    <location>
        <begin position="47"/>
        <end position="53"/>
    </location>
</feature>
<feature type="helix" evidence="8">
    <location>
        <begin position="54"/>
        <end position="59"/>
    </location>
</feature>
<feature type="helix" evidence="8">
    <location>
        <begin position="62"/>
        <end position="64"/>
    </location>
</feature>
<feature type="strand" evidence="8">
    <location>
        <begin position="70"/>
        <end position="75"/>
    </location>
</feature>
<feature type="strand" evidence="8">
    <location>
        <begin position="87"/>
        <end position="92"/>
    </location>
</feature>
<feature type="helix" evidence="8">
    <location>
        <begin position="93"/>
        <end position="101"/>
    </location>
</feature>
<feature type="helix" evidence="8">
    <location>
        <begin position="103"/>
        <end position="106"/>
    </location>
</feature>
<feature type="strand" evidence="8">
    <location>
        <begin position="109"/>
        <end position="114"/>
    </location>
</feature>
<feature type="helix" evidence="8">
    <location>
        <begin position="118"/>
        <end position="126"/>
    </location>
</feature>
<feature type="strand" evidence="8">
    <location>
        <begin position="127"/>
        <end position="140"/>
    </location>
</feature>
<feature type="strand" evidence="8">
    <location>
        <begin position="145"/>
        <end position="147"/>
    </location>
</feature>
<feature type="turn" evidence="8">
    <location>
        <begin position="153"/>
        <end position="155"/>
    </location>
</feature>
<feature type="strand" evidence="8">
    <location>
        <begin position="156"/>
        <end position="158"/>
    </location>
</feature>
<feature type="strand" evidence="8">
    <location>
        <begin position="170"/>
        <end position="172"/>
    </location>
</feature>
<feature type="strand" evidence="8">
    <location>
        <begin position="175"/>
        <end position="184"/>
    </location>
</feature>
<organism>
    <name type="scientific">Gallus gallus</name>
    <name type="common">Chicken</name>
    <dbReference type="NCBI Taxonomy" id="9031"/>
    <lineage>
        <taxon>Eukaryota</taxon>
        <taxon>Metazoa</taxon>
        <taxon>Chordata</taxon>
        <taxon>Craniata</taxon>
        <taxon>Vertebrata</taxon>
        <taxon>Euteleostomi</taxon>
        <taxon>Archelosauria</taxon>
        <taxon>Archosauria</taxon>
        <taxon>Dinosauria</taxon>
        <taxon>Saurischia</taxon>
        <taxon>Theropoda</taxon>
        <taxon>Coelurosauria</taxon>
        <taxon>Aves</taxon>
        <taxon>Neognathae</taxon>
        <taxon>Galloanserae</taxon>
        <taxon>Galliformes</taxon>
        <taxon>Phasianidae</taxon>
        <taxon>Phasianinae</taxon>
        <taxon>Gallus</taxon>
    </lineage>
</organism>
<gene>
    <name type="primary">DHFR</name>
</gene>